<dbReference type="EMBL" id="BC059432">
    <property type="protein sequence ID" value="AAH59432.1"/>
    <property type="molecule type" value="mRNA"/>
</dbReference>
<dbReference type="RefSeq" id="NP_956988.1">
    <property type="nucleotide sequence ID" value="NM_200694.1"/>
</dbReference>
<dbReference type="RefSeq" id="XP_009304161.1">
    <property type="nucleotide sequence ID" value="XM_009305886.3"/>
</dbReference>
<dbReference type="RefSeq" id="XP_009304162.1">
    <property type="nucleotide sequence ID" value="XM_009305887.4"/>
</dbReference>
<dbReference type="RefSeq" id="XP_068080230.1">
    <property type="nucleotide sequence ID" value="XM_068224129.1"/>
</dbReference>
<dbReference type="SMR" id="Q6PC91"/>
<dbReference type="FunCoup" id="Q6PC91">
    <property type="interactions" value="2727"/>
</dbReference>
<dbReference type="STRING" id="7955.ENSDARP00000137039"/>
<dbReference type="PaxDb" id="7955-ENSDARP00000094888"/>
<dbReference type="Ensembl" id="ENSDART00000104113">
    <property type="protein sequence ID" value="ENSDARP00000094888"/>
    <property type="gene ID" value="ENSDARG00000089681"/>
</dbReference>
<dbReference type="Ensembl" id="ENSDART00000162074">
    <property type="protein sequence ID" value="ENSDARP00000137039"/>
    <property type="gene ID" value="ENSDARG00000089681"/>
</dbReference>
<dbReference type="GeneID" id="393667"/>
<dbReference type="KEGG" id="dre:393667"/>
<dbReference type="AGR" id="ZFIN:ZDB-GENE-040426-1650"/>
<dbReference type="CTD" id="91408"/>
<dbReference type="ZFIN" id="ZDB-GENE-040426-1650">
    <property type="gene designation" value="btf3l4"/>
</dbReference>
<dbReference type="eggNOG" id="KOG2240">
    <property type="taxonomic scope" value="Eukaryota"/>
</dbReference>
<dbReference type="HOGENOM" id="CLU_098726_3_0_1"/>
<dbReference type="InParanoid" id="Q6PC91"/>
<dbReference type="OMA" id="RMQQSVR"/>
<dbReference type="OrthoDB" id="8033832at2759"/>
<dbReference type="PhylomeDB" id="Q6PC91"/>
<dbReference type="TreeFam" id="TF317546"/>
<dbReference type="PRO" id="PR:Q6PC91"/>
<dbReference type="Proteomes" id="UP000000437">
    <property type="component" value="Chromosome 11"/>
</dbReference>
<dbReference type="Bgee" id="ENSDARG00000089681">
    <property type="expression patterns" value="Expressed in early embryo and 28 other cell types or tissues"/>
</dbReference>
<dbReference type="ExpressionAtlas" id="Q6PC91">
    <property type="expression patterns" value="baseline"/>
</dbReference>
<dbReference type="CDD" id="cd22055">
    <property type="entry name" value="NAC_BTF3"/>
    <property type="match status" value="1"/>
</dbReference>
<dbReference type="FunFam" id="2.20.70.30:FF:000001">
    <property type="entry name" value="Transcription factor BTF3 homolog"/>
    <property type="match status" value="1"/>
</dbReference>
<dbReference type="Gene3D" id="2.20.70.30">
    <property type="entry name" value="Nascent polypeptide-associated complex domain"/>
    <property type="match status" value="1"/>
</dbReference>
<dbReference type="InterPro" id="IPR039370">
    <property type="entry name" value="BTF3"/>
</dbReference>
<dbReference type="InterPro" id="IPR038187">
    <property type="entry name" value="NAC_A/B_dom_sf"/>
</dbReference>
<dbReference type="InterPro" id="IPR002715">
    <property type="entry name" value="Nas_poly-pep-assoc_cplx_dom"/>
</dbReference>
<dbReference type="PANTHER" id="PTHR10351">
    <property type="entry name" value="TRANSCRIPTION FACTOR BTF3 FAMILY MEMBER"/>
    <property type="match status" value="1"/>
</dbReference>
<dbReference type="Pfam" id="PF01849">
    <property type="entry name" value="NAC"/>
    <property type="match status" value="1"/>
</dbReference>
<dbReference type="SMART" id="SM01407">
    <property type="entry name" value="NAC"/>
    <property type="match status" value="1"/>
</dbReference>
<dbReference type="PROSITE" id="PS51151">
    <property type="entry name" value="NAC_AB"/>
    <property type="match status" value="1"/>
</dbReference>
<comment type="similarity">
    <text evidence="3">Belongs to the NAC-beta family.</text>
</comment>
<accession>Q6PC91</accession>
<keyword id="KW-1185">Reference proteome</keyword>
<gene>
    <name type="primary">btf3l4</name>
</gene>
<protein>
    <recommendedName>
        <fullName>Transcription factor BTF3 homolog 4</fullName>
    </recommendedName>
    <alternativeName>
        <fullName>Basic transcription factor 3-like 4</fullName>
    </alternativeName>
</protein>
<proteinExistence type="evidence at transcript level"/>
<name>BT3L4_DANRE</name>
<feature type="chain" id="PRO_0000307383" description="Transcription factor BTF3 homolog 4">
    <location>
        <begin position="1"/>
        <end position="158"/>
    </location>
</feature>
<feature type="domain" description="NAC-A/B" evidence="1">
    <location>
        <begin position="33"/>
        <end position="98"/>
    </location>
</feature>
<feature type="region of interest" description="Disordered" evidence="2">
    <location>
        <begin position="125"/>
        <end position="158"/>
    </location>
</feature>
<feature type="compositionally biased region" description="Acidic residues" evidence="2">
    <location>
        <begin position="134"/>
        <end position="150"/>
    </location>
</feature>
<sequence length="158" mass="17361">MNQEKLAKLQAQVRIGGKGTARRKKKVVHRTATADDKKLQSSLKKLVVNNIAGIEEVNMIKDDGTVIHFNNPKVQASLSANTFAITGHAETKQLTEMLPGILSQLGADSLTSLRKLAEQFPRQVLDNKAPKAEDIDEEDDDVPDLVENFDEASKNEAN</sequence>
<evidence type="ECO:0000255" key="1">
    <source>
        <dbReference type="PROSITE-ProRule" id="PRU00507"/>
    </source>
</evidence>
<evidence type="ECO:0000256" key="2">
    <source>
        <dbReference type="SAM" id="MobiDB-lite"/>
    </source>
</evidence>
<evidence type="ECO:0000305" key="3"/>
<organism>
    <name type="scientific">Danio rerio</name>
    <name type="common">Zebrafish</name>
    <name type="synonym">Brachydanio rerio</name>
    <dbReference type="NCBI Taxonomy" id="7955"/>
    <lineage>
        <taxon>Eukaryota</taxon>
        <taxon>Metazoa</taxon>
        <taxon>Chordata</taxon>
        <taxon>Craniata</taxon>
        <taxon>Vertebrata</taxon>
        <taxon>Euteleostomi</taxon>
        <taxon>Actinopterygii</taxon>
        <taxon>Neopterygii</taxon>
        <taxon>Teleostei</taxon>
        <taxon>Ostariophysi</taxon>
        <taxon>Cypriniformes</taxon>
        <taxon>Danionidae</taxon>
        <taxon>Danioninae</taxon>
        <taxon>Danio</taxon>
    </lineage>
</organism>
<reference key="1">
    <citation type="submission" date="2003-10" db="EMBL/GenBank/DDBJ databases">
        <authorList>
            <consortium name="NIH - Zebrafish Gene Collection (ZGC) project"/>
        </authorList>
    </citation>
    <scope>NUCLEOTIDE SEQUENCE [LARGE SCALE MRNA]</scope>
    <source>
        <tissue>Retina</tissue>
    </source>
</reference>